<keyword id="KW-0106">Calcium</keyword>
<keyword id="KW-0130">Cell adhesion</keyword>
<keyword id="KW-1003">Cell membrane</keyword>
<keyword id="KW-0903">Direct protein sequencing</keyword>
<keyword id="KW-1015">Disulfide bond</keyword>
<keyword id="KW-0245">EGF-like domain</keyword>
<keyword id="KW-0325">Glycoprotein</keyword>
<keyword id="KW-0401">Integrin</keyword>
<keyword id="KW-0460">Magnesium</keyword>
<keyword id="KW-0472">Membrane</keyword>
<keyword id="KW-0479">Metal-binding</keyword>
<keyword id="KW-0675">Receptor</keyword>
<keyword id="KW-1185">Reference proteome</keyword>
<keyword id="KW-0677">Repeat</keyword>
<keyword id="KW-0732">Signal</keyword>
<keyword id="KW-0812">Transmembrane</keyword>
<keyword id="KW-1133">Transmembrane helix</keyword>
<reference key="1">
    <citation type="journal article" date="1992" name="Proc. Natl. Acad. Sci. U.S.A.">
        <title>Cloning and expression of mouse integrin beta p(beta 7): a functional role in Peyer's patch-specific lymphocyte homing.</title>
        <authorList>
            <person name="Hu M.C.T."/>
            <person name="Crowe D.T."/>
            <person name="Weissman I.L."/>
            <person name="Holzmann B."/>
        </authorList>
    </citation>
    <scope>NUCLEOTIDE SEQUENCE [MRNA]</scope>
</reference>
<reference key="2">
    <citation type="journal article" date="1992" name="J. Biol. Chem.">
        <title>Molecular cloning of the mouse integrin beta 7 subunit.</title>
        <authorList>
            <person name="Yuan Q."/>
            <person name="Jiang W.-M."/>
            <person name="Leung E."/>
            <person name="Hollander D."/>
            <person name="Watson J.D."/>
            <person name="Krissansen G.W."/>
        </authorList>
    </citation>
    <scope>NUCLEOTIDE SEQUENCE [MRNA]</scope>
</reference>
<reference key="3">
    <citation type="journal article" date="1992" name="J. Immunol.">
        <title>Expression of murine beta 7, alpha 4, and beta 1 integrin genes by rodent mast cells.</title>
        <authorList>
            <person name="Gurish M.F."/>
            <person name="Bell A.F."/>
            <person name="Smith T.J."/>
            <person name="Ducharme L.A."/>
            <person name="Wang R.K."/>
            <person name="Weis J.H."/>
        </authorList>
    </citation>
    <scope>NUCLEOTIDE SEQUENCE [MRNA]</scope>
</reference>
<reference key="4">
    <citation type="journal article" date="2005" name="Science">
        <title>The transcriptional landscape of the mammalian genome.</title>
        <authorList>
            <person name="Carninci P."/>
            <person name="Kasukawa T."/>
            <person name="Katayama S."/>
            <person name="Gough J."/>
            <person name="Frith M.C."/>
            <person name="Maeda N."/>
            <person name="Oyama R."/>
            <person name="Ravasi T."/>
            <person name="Lenhard B."/>
            <person name="Wells C."/>
            <person name="Kodzius R."/>
            <person name="Shimokawa K."/>
            <person name="Bajic V.B."/>
            <person name="Brenner S.E."/>
            <person name="Batalov S."/>
            <person name="Forrest A.R."/>
            <person name="Zavolan M."/>
            <person name="Davis M.J."/>
            <person name="Wilming L.G."/>
            <person name="Aidinis V."/>
            <person name="Allen J.E."/>
            <person name="Ambesi-Impiombato A."/>
            <person name="Apweiler R."/>
            <person name="Aturaliya R.N."/>
            <person name="Bailey T.L."/>
            <person name="Bansal M."/>
            <person name="Baxter L."/>
            <person name="Beisel K.W."/>
            <person name="Bersano T."/>
            <person name="Bono H."/>
            <person name="Chalk A.M."/>
            <person name="Chiu K.P."/>
            <person name="Choudhary V."/>
            <person name="Christoffels A."/>
            <person name="Clutterbuck D.R."/>
            <person name="Crowe M.L."/>
            <person name="Dalla E."/>
            <person name="Dalrymple B.P."/>
            <person name="de Bono B."/>
            <person name="Della Gatta G."/>
            <person name="di Bernardo D."/>
            <person name="Down T."/>
            <person name="Engstrom P."/>
            <person name="Fagiolini M."/>
            <person name="Faulkner G."/>
            <person name="Fletcher C.F."/>
            <person name="Fukushima T."/>
            <person name="Furuno M."/>
            <person name="Futaki S."/>
            <person name="Gariboldi M."/>
            <person name="Georgii-Hemming P."/>
            <person name="Gingeras T.R."/>
            <person name="Gojobori T."/>
            <person name="Green R.E."/>
            <person name="Gustincich S."/>
            <person name="Harbers M."/>
            <person name="Hayashi Y."/>
            <person name="Hensch T.K."/>
            <person name="Hirokawa N."/>
            <person name="Hill D."/>
            <person name="Huminiecki L."/>
            <person name="Iacono M."/>
            <person name="Ikeo K."/>
            <person name="Iwama A."/>
            <person name="Ishikawa T."/>
            <person name="Jakt M."/>
            <person name="Kanapin A."/>
            <person name="Katoh M."/>
            <person name="Kawasawa Y."/>
            <person name="Kelso J."/>
            <person name="Kitamura H."/>
            <person name="Kitano H."/>
            <person name="Kollias G."/>
            <person name="Krishnan S.P."/>
            <person name="Kruger A."/>
            <person name="Kummerfeld S.K."/>
            <person name="Kurochkin I.V."/>
            <person name="Lareau L.F."/>
            <person name="Lazarevic D."/>
            <person name="Lipovich L."/>
            <person name="Liu J."/>
            <person name="Liuni S."/>
            <person name="McWilliam S."/>
            <person name="Madan Babu M."/>
            <person name="Madera M."/>
            <person name="Marchionni L."/>
            <person name="Matsuda H."/>
            <person name="Matsuzawa S."/>
            <person name="Miki H."/>
            <person name="Mignone F."/>
            <person name="Miyake S."/>
            <person name="Morris K."/>
            <person name="Mottagui-Tabar S."/>
            <person name="Mulder N."/>
            <person name="Nakano N."/>
            <person name="Nakauchi H."/>
            <person name="Ng P."/>
            <person name="Nilsson R."/>
            <person name="Nishiguchi S."/>
            <person name="Nishikawa S."/>
            <person name="Nori F."/>
            <person name="Ohara O."/>
            <person name="Okazaki Y."/>
            <person name="Orlando V."/>
            <person name="Pang K.C."/>
            <person name="Pavan W.J."/>
            <person name="Pavesi G."/>
            <person name="Pesole G."/>
            <person name="Petrovsky N."/>
            <person name="Piazza S."/>
            <person name="Reed J."/>
            <person name="Reid J.F."/>
            <person name="Ring B.Z."/>
            <person name="Ringwald M."/>
            <person name="Rost B."/>
            <person name="Ruan Y."/>
            <person name="Salzberg S.L."/>
            <person name="Sandelin A."/>
            <person name="Schneider C."/>
            <person name="Schoenbach C."/>
            <person name="Sekiguchi K."/>
            <person name="Semple C.A."/>
            <person name="Seno S."/>
            <person name="Sessa L."/>
            <person name="Sheng Y."/>
            <person name="Shibata Y."/>
            <person name="Shimada H."/>
            <person name="Shimada K."/>
            <person name="Silva D."/>
            <person name="Sinclair B."/>
            <person name="Sperling S."/>
            <person name="Stupka E."/>
            <person name="Sugiura K."/>
            <person name="Sultana R."/>
            <person name="Takenaka Y."/>
            <person name="Taki K."/>
            <person name="Tammoja K."/>
            <person name="Tan S.L."/>
            <person name="Tang S."/>
            <person name="Taylor M.S."/>
            <person name="Tegner J."/>
            <person name="Teichmann S.A."/>
            <person name="Ueda H.R."/>
            <person name="van Nimwegen E."/>
            <person name="Verardo R."/>
            <person name="Wei C.L."/>
            <person name="Yagi K."/>
            <person name="Yamanishi H."/>
            <person name="Zabarovsky E."/>
            <person name="Zhu S."/>
            <person name="Zimmer A."/>
            <person name="Hide W."/>
            <person name="Bult C."/>
            <person name="Grimmond S.M."/>
            <person name="Teasdale R.D."/>
            <person name="Liu E.T."/>
            <person name="Brusic V."/>
            <person name="Quackenbush J."/>
            <person name="Wahlestedt C."/>
            <person name="Mattick J.S."/>
            <person name="Hume D.A."/>
            <person name="Kai C."/>
            <person name="Sasaki D."/>
            <person name="Tomaru Y."/>
            <person name="Fukuda S."/>
            <person name="Kanamori-Katayama M."/>
            <person name="Suzuki M."/>
            <person name="Aoki J."/>
            <person name="Arakawa T."/>
            <person name="Iida J."/>
            <person name="Imamura K."/>
            <person name="Itoh M."/>
            <person name="Kato T."/>
            <person name="Kawaji H."/>
            <person name="Kawagashira N."/>
            <person name="Kawashima T."/>
            <person name="Kojima M."/>
            <person name="Kondo S."/>
            <person name="Konno H."/>
            <person name="Nakano K."/>
            <person name="Ninomiya N."/>
            <person name="Nishio T."/>
            <person name="Okada M."/>
            <person name="Plessy C."/>
            <person name="Shibata K."/>
            <person name="Shiraki T."/>
            <person name="Suzuki S."/>
            <person name="Tagami M."/>
            <person name="Waki K."/>
            <person name="Watahiki A."/>
            <person name="Okamura-Oho Y."/>
            <person name="Suzuki H."/>
            <person name="Kawai J."/>
            <person name="Hayashizaki Y."/>
        </authorList>
    </citation>
    <scope>NUCLEOTIDE SEQUENCE [LARGE SCALE MRNA]</scope>
    <source>
        <strain>C57BL/6J</strain>
        <strain>NOD</strain>
        <tissue>Colon</tissue>
    </source>
</reference>
<reference key="5">
    <citation type="journal article" date="2004" name="Genome Res.">
        <title>The status, quality, and expansion of the NIH full-length cDNA project: the Mammalian Gene Collection (MGC).</title>
        <authorList>
            <consortium name="The MGC Project Team"/>
        </authorList>
    </citation>
    <scope>NUCLEOTIDE SEQUENCE [LARGE SCALE MRNA]</scope>
    <source>
        <strain>FVB/N</strain>
        <tissue>Salivary gland</tissue>
    </source>
</reference>
<reference key="6">
    <citation type="journal article" date="1991" name="Biochem. Biophys. Res. Commun.">
        <title>Identity between the novel integrin beta 7 subunit and an antigen found highly expressed on intraepithelial lymphocytes in the small intestine.</title>
        <authorList>
            <person name="Yuan Q."/>
            <person name="Jiang W.-M."/>
            <person name="Hollander D."/>
            <person name="Leung E."/>
            <person name="Watson J.D."/>
            <person name="Krissansen G.W."/>
        </authorList>
    </citation>
    <scope>NUCLEOTIDE SEQUENCE OF 1-90</scope>
    <scope>PROTEIN SEQUENCE OF 20-32</scope>
</reference>
<reference key="7">
    <citation type="journal article" date="1993" name="Int. Immunol.">
        <title>The mouse beta 7 integrin gene promoter: transcriptional regulation of the leukocyte integrins LPAM-1 and M290.</title>
        <authorList>
            <person name="Leung E."/>
            <person name="Mead P.E."/>
            <person name="Yuan Q."/>
            <person name="Jiang W.M."/>
            <person name="Watson J.D."/>
            <person name="Krissansen G.W."/>
        </authorList>
    </citation>
    <scope>NUCLEOTIDE SEQUENCE OF 1-67</scope>
</reference>
<gene>
    <name type="primary">Itgb7</name>
</gene>
<protein>
    <recommendedName>
        <fullName>Integrin beta-7</fullName>
    </recommendedName>
    <alternativeName>
        <fullName>Integrin beta-P</fullName>
    </alternativeName>
    <alternativeName>
        <fullName>M290 IEL antigen</fullName>
    </alternativeName>
</protein>
<name>ITB7_MOUSE</name>
<dbReference type="EMBL" id="M68903">
    <property type="protein sequence ID" value="AAA02749.1"/>
    <property type="molecule type" value="mRNA"/>
</dbReference>
<dbReference type="EMBL" id="M95632">
    <property type="protein sequence ID" value="AAA39323.1"/>
    <property type="molecule type" value="mRNA"/>
</dbReference>
<dbReference type="EMBL" id="M95633">
    <property type="protein sequence ID" value="AAA39324.1"/>
    <property type="molecule type" value="mRNA"/>
</dbReference>
<dbReference type="EMBL" id="S44607">
    <property type="protein sequence ID" value="AAB23193.1"/>
    <property type="molecule type" value="mRNA"/>
</dbReference>
<dbReference type="EMBL" id="AK078871">
    <property type="protein sequence ID" value="BAC37433.1"/>
    <property type="molecule type" value="mRNA"/>
</dbReference>
<dbReference type="EMBL" id="AK154766">
    <property type="protein sequence ID" value="BAE32815.1"/>
    <property type="molecule type" value="mRNA"/>
</dbReference>
<dbReference type="EMBL" id="AK155207">
    <property type="protein sequence ID" value="BAE33119.1"/>
    <property type="molecule type" value="mRNA"/>
</dbReference>
<dbReference type="EMBL" id="BC011184">
    <property type="protein sequence ID" value="AAH11184.1"/>
    <property type="molecule type" value="mRNA"/>
</dbReference>
<dbReference type="EMBL" id="S63504">
    <property type="protein sequence ID" value="AAB27396.1"/>
    <property type="molecule type" value="Genomic_DNA"/>
</dbReference>
<dbReference type="CCDS" id="CCDS49740.1"/>
<dbReference type="PIR" id="A46271">
    <property type="entry name" value="A46271"/>
</dbReference>
<dbReference type="PIR" id="I54754">
    <property type="entry name" value="I54754"/>
</dbReference>
<dbReference type="RefSeq" id="NP_038594.2">
    <property type="nucleotide sequence ID" value="NM_013566.2"/>
</dbReference>
<dbReference type="SMR" id="P26011"/>
<dbReference type="ComplexPortal" id="CPX-3077">
    <property type="entry name" value="Integrin alpha4-beta7 complex"/>
</dbReference>
<dbReference type="ComplexPortal" id="CPX-3127">
    <property type="entry name" value="Integrin alphaE-beta7 complex"/>
</dbReference>
<dbReference type="FunCoup" id="P26011">
    <property type="interactions" value="557"/>
</dbReference>
<dbReference type="STRING" id="10090.ENSMUSP00000001327"/>
<dbReference type="BindingDB" id="P26011"/>
<dbReference type="ChEMBL" id="CHEMBL2111481"/>
<dbReference type="GlyCosmos" id="P26011">
    <property type="glycosylation" value="8 sites, No reported glycans"/>
</dbReference>
<dbReference type="GlyGen" id="P26011">
    <property type="glycosylation" value="8 sites"/>
</dbReference>
<dbReference type="iPTMnet" id="P26011"/>
<dbReference type="PhosphoSitePlus" id="P26011"/>
<dbReference type="jPOST" id="P26011"/>
<dbReference type="PaxDb" id="10090-ENSMUSP00000001327"/>
<dbReference type="PeptideAtlas" id="P26011"/>
<dbReference type="ProteomicsDB" id="301693"/>
<dbReference type="Antibodypedia" id="26942">
    <property type="antibodies" value="561 antibodies from 38 providers"/>
</dbReference>
<dbReference type="DNASU" id="16421"/>
<dbReference type="Ensembl" id="ENSMUST00000001327.11">
    <property type="protein sequence ID" value="ENSMUSP00000001327.4"/>
    <property type="gene ID" value="ENSMUSG00000001281.11"/>
</dbReference>
<dbReference type="GeneID" id="16421"/>
<dbReference type="KEGG" id="mmu:16421"/>
<dbReference type="UCSC" id="uc012aaa.1">
    <property type="organism name" value="mouse"/>
</dbReference>
<dbReference type="AGR" id="MGI:96616"/>
<dbReference type="CTD" id="3695"/>
<dbReference type="MGI" id="MGI:96616">
    <property type="gene designation" value="Itgb7"/>
</dbReference>
<dbReference type="VEuPathDB" id="HostDB:ENSMUSG00000001281"/>
<dbReference type="eggNOG" id="KOG1226">
    <property type="taxonomic scope" value="Eukaryota"/>
</dbReference>
<dbReference type="GeneTree" id="ENSGT01130000278313"/>
<dbReference type="HOGENOM" id="CLU_011772_2_1_1"/>
<dbReference type="InParanoid" id="P26011"/>
<dbReference type="OMA" id="CECSMDT"/>
<dbReference type="OrthoDB" id="410592at2759"/>
<dbReference type="PhylomeDB" id="P26011"/>
<dbReference type="TreeFam" id="TF105392"/>
<dbReference type="Reactome" id="R-MMU-198933">
    <property type="pathway name" value="Immunoregulatory interactions between a Lymphoid and a non-Lymphoid cell"/>
</dbReference>
<dbReference type="Reactome" id="R-MMU-216083">
    <property type="pathway name" value="Integrin cell surface interactions"/>
</dbReference>
<dbReference type="BioGRID-ORCS" id="16421">
    <property type="hits" value="2 hits in 79 CRISPR screens"/>
</dbReference>
<dbReference type="ChiTaRS" id="Itgb7">
    <property type="organism name" value="mouse"/>
</dbReference>
<dbReference type="PRO" id="PR:P26011"/>
<dbReference type="Proteomes" id="UP000000589">
    <property type="component" value="Chromosome 15"/>
</dbReference>
<dbReference type="RNAct" id="P26011">
    <property type="molecule type" value="protein"/>
</dbReference>
<dbReference type="Bgee" id="ENSMUSG00000001281">
    <property type="expression patterns" value="Expressed in blood and 132 other cell types or tissues"/>
</dbReference>
<dbReference type="ExpressionAtlas" id="P26011">
    <property type="expression patterns" value="baseline and differential"/>
</dbReference>
<dbReference type="GO" id="GO:0009986">
    <property type="term" value="C:cell surface"/>
    <property type="evidence" value="ECO:0007669"/>
    <property type="project" value="Ensembl"/>
</dbReference>
<dbReference type="GO" id="GO:0034669">
    <property type="term" value="C:integrin alpha4-beta7 complex"/>
    <property type="evidence" value="ECO:0007669"/>
    <property type="project" value="Ensembl"/>
</dbReference>
<dbReference type="GO" id="GO:0043235">
    <property type="term" value="C:receptor complex"/>
    <property type="evidence" value="ECO:0000266"/>
    <property type="project" value="MGI"/>
</dbReference>
<dbReference type="GO" id="GO:0050839">
    <property type="term" value="F:cell adhesion molecule binding"/>
    <property type="evidence" value="ECO:0007669"/>
    <property type="project" value="Ensembl"/>
</dbReference>
<dbReference type="GO" id="GO:0046872">
    <property type="term" value="F:metal ion binding"/>
    <property type="evidence" value="ECO:0007669"/>
    <property type="project" value="UniProtKB-KW"/>
</dbReference>
<dbReference type="GO" id="GO:0003366">
    <property type="term" value="P:cell-matrix adhesion involved in ameboidal cell migration"/>
    <property type="evidence" value="ECO:0007669"/>
    <property type="project" value="Ensembl"/>
</dbReference>
<dbReference type="GO" id="GO:0034113">
    <property type="term" value="P:heterotypic cell-cell adhesion"/>
    <property type="evidence" value="ECO:0007669"/>
    <property type="project" value="Ensembl"/>
</dbReference>
<dbReference type="GO" id="GO:0007229">
    <property type="term" value="P:integrin-mediated signaling pathway"/>
    <property type="evidence" value="ECO:0007669"/>
    <property type="project" value="UniProtKB-KW"/>
</dbReference>
<dbReference type="GO" id="GO:0050900">
    <property type="term" value="P:leukocyte migration"/>
    <property type="evidence" value="ECO:0000315"/>
    <property type="project" value="MGI"/>
</dbReference>
<dbReference type="GO" id="GO:0050901">
    <property type="term" value="P:leukocyte tethering or rolling"/>
    <property type="evidence" value="ECO:0007669"/>
    <property type="project" value="Ensembl"/>
</dbReference>
<dbReference type="GO" id="GO:0043113">
    <property type="term" value="P:receptor clustering"/>
    <property type="evidence" value="ECO:0007669"/>
    <property type="project" value="Ensembl"/>
</dbReference>
<dbReference type="GO" id="GO:0034446">
    <property type="term" value="P:substrate adhesion-dependent cell spreading"/>
    <property type="evidence" value="ECO:0007669"/>
    <property type="project" value="Ensembl"/>
</dbReference>
<dbReference type="GO" id="GO:0072678">
    <property type="term" value="P:T cell migration"/>
    <property type="evidence" value="ECO:0000315"/>
    <property type="project" value="MGI"/>
</dbReference>
<dbReference type="FunFam" id="1.20.5.100:FF:000009">
    <property type="entry name" value="Integrin beta"/>
    <property type="match status" value="1"/>
</dbReference>
<dbReference type="FunFam" id="2.10.25.10:FF:000304">
    <property type="entry name" value="Integrin beta"/>
    <property type="match status" value="1"/>
</dbReference>
<dbReference type="FunFam" id="2.10.25.10:FF:000305">
    <property type="entry name" value="Integrin beta"/>
    <property type="match status" value="1"/>
</dbReference>
<dbReference type="FunFam" id="2.10.25.10:FF:000402">
    <property type="entry name" value="Integrin beta"/>
    <property type="match status" value="1"/>
</dbReference>
<dbReference type="FunFam" id="2.10.25.10:FF:000449">
    <property type="entry name" value="Integrin beta"/>
    <property type="match status" value="1"/>
</dbReference>
<dbReference type="FunFam" id="3.30.1680.10:FF:000014">
    <property type="entry name" value="Integrin beta"/>
    <property type="match status" value="1"/>
</dbReference>
<dbReference type="FunFam" id="3.40.50.410:FF:000002">
    <property type="entry name" value="Integrin beta"/>
    <property type="match status" value="1"/>
</dbReference>
<dbReference type="Gene3D" id="1.20.5.100">
    <property type="entry name" value="Cytochrome c1, transmembrane anchor, C-terminal"/>
    <property type="match status" value="1"/>
</dbReference>
<dbReference type="Gene3D" id="2.10.25.10">
    <property type="entry name" value="Laminin"/>
    <property type="match status" value="4"/>
</dbReference>
<dbReference type="Gene3D" id="3.30.1680.10">
    <property type="entry name" value="ligand-binding face of the semaphorins, domain 2"/>
    <property type="match status" value="1"/>
</dbReference>
<dbReference type="Gene3D" id="2.60.40.1510">
    <property type="entry name" value="ntegrin, alpha v. Chain A, domain 3"/>
    <property type="match status" value="1"/>
</dbReference>
<dbReference type="Gene3D" id="3.40.50.410">
    <property type="entry name" value="von Willebrand factor, type A domain"/>
    <property type="match status" value="1"/>
</dbReference>
<dbReference type="InterPro" id="IPR013111">
    <property type="entry name" value="EGF_extracell"/>
</dbReference>
<dbReference type="InterPro" id="IPR040622">
    <property type="entry name" value="I-EGF_1"/>
</dbReference>
<dbReference type="InterPro" id="IPR033760">
    <property type="entry name" value="Integrin_beta_N"/>
</dbReference>
<dbReference type="InterPro" id="IPR015812">
    <property type="entry name" value="Integrin_bsu"/>
</dbReference>
<dbReference type="InterPro" id="IPR014836">
    <property type="entry name" value="Integrin_bsu_cyt_dom"/>
</dbReference>
<dbReference type="InterPro" id="IPR012896">
    <property type="entry name" value="Integrin_bsu_tail"/>
</dbReference>
<dbReference type="InterPro" id="IPR036349">
    <property type="entry name" value="Integrin_bsu_tail_dom_sf"/>
</dbReference>
<dbReference type="InterPro" id="IPR002369">
    <property type="entry name" value="Integrin_bsu_VWA"/>
</dbReference>
<dbReference type="InterPro" id="IPR032695">
    <property type="entry name" value="Integrin_dom_sf"/>
</dbReference>
<dbReference type="InterPro" id="IPR016201">
    <property type="entry name" value="PSI"/>
</dbReference>
<dbReference type="InterPro" id="IPR036465">
    <property type="entry name" value="vWFA_dom_sf"/>
</dbReference>
<dbReference type="PANTHER" id="PTHR10082">
    <property type="entry name" value="INTEGRIN BETA SUBUNIT"/>
    <property type="match status" value="1"/>
</dbReference>
<dbReference type="PANTHER" id="PTHR10082:SF36">
    <property type="entry name" value="INTEGRIN BETA-7"/>
    <property type="match status" value="1"/>
</dbReference>
<dbReference type="Pfam" id="PF07974">
    <property type="entry name" value="EGF_2"/>
    <property type="match status" value="1"/>
</dbReference>
<dbReference type="Pfam" id="PF18372">
    <property type="entry name" value="I-EGF_1"/>
    <property type="match status" value="1"/>
</dbReference>
<dbReference type="Pfam" id="PF08725">
    <property type="entry name" value="Integrin_b_cyt"/>
    <property type="match status" value="1"/>
</dbReference>
<dbReference type="Pfam" id="PF00362">
    <property type="entry name" value="Integrin_beta"/>
    <property type="match status" value="1"/>
</dbReference>
<dbReference type="Pfam" id="PF17205">
    <property type="entry name" value="PSI_integrin"/>
    <property type="match status" value="1"/>
</dbReference>
<dbReference type="PIRSF" id="PIRSF002512">
    <property type="entry name" value="Integrin_B"/>
    <property type="match status" value="1"/>
</dbReference>
<dbReference type="PRINTS" id="PR01186">
    <property type="entry name" value="INTEGRINB"/>
</dbReference>
<dbReference type="SMART" id="SM00187">
    <property type="entry name" value="INB"/>
    <property type="match status" value="1"/>
</dbReference>
<dbReference type="SMART" id="SM01241">
    <property type="entry name" value="Integrin_b_cyt"/>
    <property type="match status" value="1"/>
</dbReference>
<dbReference type="SMART" id="SM01242">
    <property type="entry name" value="Integrin_B_tail"/>
    <property type="match status" value="1"/>
</dbReference>
<dbReference type="SMART" id="SM00423">
    <property type="entry name" value="PSI"/>
    <property type="match status" value="1"/>
</dbReference>
<dbReference type="SUPFAM" id="SSF57196">
    <property type="entry name" value="EGF/Laminin"/>
    <property type="match status" value="2"/>
</dbReference>
<dbReference type="SUPFAM" id="SSF69687">
    <property type="entry name" value="Integrin beta tail domain"/>
    <property type="match status" value="1"/>
</dbReference>
<dbReference type="SUPFAM" id="SSF69179">
    <property type="entry name" value="Integrin domains"/>
    <property type="match status" value="1"/>
</dbReference>
<dbReference type="SUPFAM" id="SSF103575">
    <property type="entry name" value="Plexin repeat"/>
    <property type="match status" value="1"/>
</dbReference>
<dbReference type="SUPFAM" id="SSF53300">
    <property type="entry name" value="vWA-like"/>
    <property type="match status" value="1"/>
</dbReference>
<dbReference type="PROSITE" id="PS00022">
    <property type="entry name" value="EGF_1"/>
    <property type="match status" value="4"/>
</dbReference>
<dbReference type="PROSITE" id="PS01186">
    <property type="entry name" value="EGF_2"/>
    <property type="match status" value="1"/>
</dbReference>
<dbReference type="PROSITE" id="PS00243">
    <property type="entry name" value="I_EGF_1"/>
    <property type="match status" value="3"/>
</dbReference>
<dbReference type="PROSITE" id="PS52047">
    <property type="entry name" value="I_EGF_2"/>
    <property type="match status" value="4"/>
</dbReference>
<organism>
    <name type="scientific">Mus musculus</name>
    <name type="common">Mouse</name>
    <dbReference type="NCBI Taxonomy" id="10090"/>
    <lineage>
        <taxon>Eukaryota</taxon>
        <taxon>Metazoa</taxon>
        <taxon>Chordata</taxon>
        <taxon>Craniata</taxon>
        <taxon>Vertebrata</taxon>
        <taxon>Euteleostomi</taxon>
        <taxon>Mammalia</taxon>
        <taxon>Eutheria</taxon>
        <taxon>Euarchontoglires</taxon>
        <taxon>Glires</taxon>
        <taxon>Rodentia</taxon>
        <taxon>Myomorpha</taxon>
        <taxon>Muroidea</taxon>
        <taxon>Muridae</taxon>
        <taxon>Murinae</taxon>
        <taxon>Mus</taxon>
        <taxon>Mus</taxon>
    </lineage>
</organism>
<comment type="function">
    <text evidence="3">Integrin ITGA4/ITGB7 (alpha-4/beta-7) (Peyer patches-specific homing receptor LPAM-1) is an adhesion molecule that mediates lymphocyte migration and homing to gut-associated lymphoid tissue (GALT). Integrin ITGA4/ITGB7 interacts with the cell surface adhesion molecules MADCAM1 which is normally expressed by the vascular endothelium of the gastrointestinal tract. Also interacts with VCAM1 and fibronectin, an extracellular matrix component. It recognizes one or more domains within the alternatively spliced CS-1 region of fibronectin. Interactions involve the tripeptide L-D-T in MADCAM1, and L-D-V in fibronectin. Integrin ITGAE/ITGB7 (alpha-E/beta-7, HML-1) is a receptor for E-cadherin.</text>
</comment>
<comment type="subunit">
    <text evidence="3">Heterodimer of an alpha and a beta subunit. ITGB7/beta-7 associates with either ITGA4/alpha-4 or ITGAE/alpha-E. Integrin ITGA4/ITGB7 interacts with MADCAM1. Integrin ITGA4/ITGB7 interacts with VCAM1 and fibronectin. Interacts with FLNA (via filamin repeats 4, 9, 12, 17, 19, 21, and 23).</text>
</comment>
<comment type="subcellular location">
    <subcellularLocation>
        <location evidence="8">Cell membrane</location>
        <topology evidence="4">Single-pass type I membrane protein</topology>
    </subcellularLocation>
</comment>
<comment type="domain">
    <text evidence="3">The VWFA domain (or beta I domain) contains three cation-binding sites: the ligand-associated metal ion-binding site (LIMBS or SyMBS), the metal ion-dependent adhesion site (MIDAS), and the adjacent MIDAS site (ADMIDAS). This domain is also part of the ligand-binding site. The MIDAS site is required for both rolling and adhesion. The ADMIDAS site is required for rolling and mediates the negative regulatory effects of higher Ca(2+) concentration on ligand binding. The LIMBS site is required for adhesion and mediates the positive regulatory effects of low Ca(2+) concentrations on ligand binding.</text>
</comment>
<comment type="similarity">
    <text evidence="8">Belongs to the integrin beta chain family.</text>
</comment>
<feature type="signal peptide" evidence="7">
    <location>
        <begin position="1"/>
        <end position="19"/>
    </location>
</feature>
<feature type="chain" id="PRO_0000016353" description="Integrin beta-7">
    <location>
        <begin position="20"/>
        <end position="806"/>
    </location>
</feature>
<feature type="topological domain" description="Extracellular" evidence="4">
    <location>
        <begin position="20"/>
        <end position="724"/>
    </location>
</feature>
<feature type="transmembrane region" description="Helical" evidence="4">
    <location>
        <begin position="725"/>
        <end position="745"/>
    </location>
</feature>
<feature type="topological domain" description="Cytoplasmic" evidence="4">
    <location>
        <begin position="746"/>
        <end position="806"/>
    </location>
</feature>
<feature type="domain" description="PSI" evidence="4">
    <location>
        <begin position="44"/>
        <end position="92"/>
    </location>
</feature>
<feature type="domain" description="VWFA" evidence="3">
    <location>
        <begin position="150"/>
        <end position="389"/>
    </location>
</feature>
<feature type="domain" description="I-EGF 1" evidence="5">
    <location>
        <begin position="478"/>
        <end position="512"/>
    </location>
</feature>
<feature type="domain" description="I-EGF 2" evidence="5">
    <location>
        <begin position="513"/>
        <end position="560"/>
    </location>
</feature>
<feature type="domain" description="I-EGF 3" evidence="5">
    <location>
        <begin position="561"/>
        <end position="597"/>
    </location>
</feature>
<feature type="domain" description="I-EGF 4" evidence="5">
    <location>
        <begin position="598"/>
        <end position="636"/>
    </location>
</feature>
<feature type="region of interest" description="Disordered" evidence="6">
    <location>
        <begin position="98"/>
        <end position="123"/>
    </location>
</feature>
<feature type="region of interest" description="Disordered" evidence="6">
    <location>
        <begin position="786"/>
        <end position="806"/>
    </location>
</feature>
<feature type="compositionally biased region" description="Basic and acidic residues" evidence="6">
    <location>
        <begin position="98"/>
        <end position="107"/>
    </location>
</feature>
<feature type="binding site" description="in MIDAS binding site" evidence="3">
    <location>
        <position position="161"/>
    </location>
    <ligand>
        <name>Mg(2+)</name>
        <dbReference type="ChEBI" id="CHEBI:18420"/>
    </ligand>
</feature>
<feature type="binding site" description="in ADMIDAS binding site" evidence="3">
    <location>
        <position position="163"/>
    </location>
    <ligand>
        <name>Ca(2+)</name>
        <dbReference type="ChEBI" id="CHEBI:29108"/>
        <label>1</label>
    </ligand>
</feature>
<feature type="binding site" description="in MIDAS binding site" evidence="3">
    <location>
        <position position="163"/>
    </location>
    <ligand>
        <name>Mg(2+)</name>
        <dbReference type="ChEBI" id="CHEBI:18420"/>
    </ligand>
</feature>
<feature type="binding site" description="in ADMIDAS binding site" evidence="3">
    <location>
        <position position="166"/>
    </location>
    <ligand>
        <name>Ca(2+)</name>
        <dbReference type="ChEBI" id="CHEBI:29108"/>
        <label>1</label>
    </ligand>
</feature>
<feature type="binding site" description="in ADMIDAS binding site" evidence="3">
    <location>
        <position position="167"/>
    </location>
    <ligand>
        <name>Ca(2+)</name>
        <dbReference type="ChEBI" id="CHEBI:29108"/>
        <label>1</label>
    </ligand>
</feature>
<feature type="binding site" description="in LIMBS binding site" evidence="3">
    <location>
        <position position="198"/>
    </location>
    <ligand>
        <name>Ca(2+)</name>
        <dbReference type="ChEBI" id="CHEBI:29108"/>
        <label>2</label>
    </ligand>
</feature>
<feature type="binding site" description="in LIMBS binding site" evidence="3">
    <location>
        <position position="254"/>
    </location>
    <ligand>
        <name>Ca(2+)</name>
        <dbReference type="ChEBI" id="CHEBI:29108"/>
        <label>2</label>
    </ligand>
</feature>
<feature type="binding site" description="in LIMBS binding site" evidence="3">
    <location>
        <position position="256"/>
    </location>
    <ligand>
        <name>Ca(2+)</name>
        <dbReference type="ChEBI" id="CHEBI:29108"/>
        <label>2</label>
    </ligand>
</feature>
<feature type="binding site" description="in LIMBS binding site" evidence="3">
    <location>
        <position position="258"/>
    </location>
    <ligand>
        <name>Ca(2+)</name>
        <dbReference type="ChEBI" id="CHEBI:29108"/>
        <label>2</label>
    </ligand>
</feature>
<feature type="binding site" description="in LIMBS binding site" evidence="1">
    <location>
        <position position="259"/>
    </location>
    <ligand>
        <name>Ca(2+)</name>
        <dbReference type="ChEBI" id="CHEBI:29108"/>
        <label>2</label>
    </ligand>
</feature>
<feature type="binding site" description="in MIDAS binding site" evidence="3">
    <location>
        <position position="259"/>
    </location>
    <ligand>
        <name>Mg(2+)</name>
        <dbReference type="ChEBI" id="CHEBI:18420"/>
    </ligand>
</feature>
<feature type="binding site" description="in ADMIDAS binding site and liganded-open conformation" evidence="1">
    <location>
        <position position="289"/>
    </location>
    <ligand>
        <name>Ca(2+)</name>
        <dbReference type="ChEBI" id="CHEBI:29108"/>
        <label>1</label>
    </ligand>
</feature>
<feature type="binding site" description="in ADMIDAS binding site and unliganded-closed conformation" evidence="3">
    <location>
        <position position="373"/>
    </location>
    <ligand>
        <name>Ca(2+)</name>
        <dbReference type="ChEBI" id="CHEBI:29108"/>
        <label>1</label>
    </ligand>
</feature>
<feature type="glycosylation site" description="N-linked (GlcNAc...) asparagine" evidence="4">
    <location>
        <position position="68"/>
    </location>
</feature>
<feature type="glycosylation site" description="N-linked (GlcNAc...) asparagine" evidence="4">
    <location>
        <position position="250"/>
    </location>
</feature>
<feature type="glycosylation site" description="N-linked (GlcNAc...) asparagine" evidence="4">
    <location>
        <position position="279"/>
    </location>
</feature>
<feature type="glycosylation site" description="N-linked (GlcNAc...) asparagine" evidence="4">
    <location>
        <position position="434"/>
    </location>
</feature>
<feature type="glycosylation site" description="N-linked (GlcNAc...) asparagine" evidence="4">
    <location>
        <position position="531"/>
    </location>
</feature>
<feature type="glycosylation site" description="N-linked (GlcNAc...) asparagine" evidence="4">
    <location>
        <position position="590"/>
    </location>
</feature>
<feature type="glycosylation site" description="N-linked (GlcNAc...) asparagine" evidence="4">
    <location>
        <position position="665"/>
    </location>
</feature>
<feature type="glycosylation site" description="N-linked (GlcNAc...) asparagine" evidence="4">
    <location>
        <position position="674"/>
    </location>
</feature>
<feature type="disulfide bond" evidence="2">
    <location>
        <begin position="51"/>
        <end position="476"/>
    </location>
</feature>
<feature type="disulfide bond" evidence="2">
    <location>
        <begin position="54"/>
        <end position="80"/>
    </location>
</feature>
<feature type="disulfide bond" evidence="2">
    <location>
        <begin position="64"/>
        <end position="91"/>
    </location>
</feature>
<feature type="disulfide bond" evidence="3">
    <location>
        <begin position="216"/>
        <end position="223"/>
    </location>
</feature>
<feature type="disulfide bond" evidence="3">
    <location>
        <begin position="271"/>
        <end position="311"/>
    </location>
</feature>
<feature type="disulfide bond" evidence="3">
    <location>
        <begin position="412"/>
        <end position="428"/>
    </location>
</feature>
<feature type="disulfide bond" evidence="3">
    <location>
        <begin position="448"/>
        <end position="474"/>
    </location>
</feature>
<feature type="disulfide bond" evidence="5">
    <location>
        <begin position="478"/>
        <end position="497"/>
    </location>
</feature>
<feature type="disulfide bond" evidence="5">
    <location>
        <begin position="488"/>
        <end position="500"/>
    </location>
</feature>
<feature type="disulfide bond" evidence="5">
    <location>
        <begin position="502"/>
        <end position="511"/>
    </location>
</feature>
<feature type="disulfide bond" evidence="5">
    <location>
        <begin position="513"/>
        <end position="545"/>
    </location>
</feature>
<feature type="disulfide bond" evidence="5">
    <location>
        <begin position="527"/>
        <end position="543"/>
    </location>
</feature>
<feature type="disulfide bond" evidence="5">
    <location>
        <begin position="537"/>
        <end position="548"/>
    </location>
</feature>
<feature type="disulfide bond" evidence="5">
    <location>
        <begin position="550"/>
        <end position="559"/>
    </location>
</feature>
<feature type="disulfide bond" evidence="5">
    <location>
        <begin position="561"/>
        <end position="582"/>
    </location>
</feature>
<feature type="disulfide bond" evidence="5">
    <location>
        <begin position="566"/>
        <end position="580"/>
    </location>
</feature>
<feature type="disulfide bond" evidence="5">
    <location>
        <begin position="574"/>
        <end position="585"/>
    </location>
</feature>
<feature type="disulfide bond" evidence="5">
    <location>
        <begin position="587"/>
        <end position="596"/>
    </location>
</feature>
<feature type="disulfide bond" evidence="5">
    <location>
        <begin position="598"/>
        <end position="621"/>
    </location>
</feature>
<feature type="disulfide bond" evidence="5">
    <location>
        <begin position="605"/>
        <end position="619"/>
    </location>
</feature>
<feature type="disulfide bond" evidence="5">
    <location>
        <begin position="613"/>
        <end position="624"/>
    </location>
</feature>
<feature type="disulfide bond" evidence="5">
    <location>
        <begin position="626"/>
        <end position="635"/>
    </location>
</feature>
<feature type="disulfide bond" evidence="2">
    <location>
        <begin position="638"/>
        <end position="641"/>
    </location>
</feature>
<feature type="disulfide bond" evidence="2">
    <location>
        <begin position="645"/>
        <end position="688"/>
    </location>
</feature>
<feature type="disulfide bond" evidence="2">
    <location>
        <begin position="651"/>
        <end position="670"/>
    </location>
</feature>
<feature type="disulfide bond" evidence="2">
    <location>
        <begin position="654"/>
        <end position="666"/>
    </location>
</feature>
<feature type="sequence conflict" description="In Ref. 6; AA sequence." evidence="8" ref="6">
    <original>A</original>
    <variation>E</variation>
    <location>
        <position position="81"/>
    </location>
</feature>
<feature type="sequence conflict" description="In Ref. 3; AAB23193." evidence="8" ref="3">
    <original>A</original>
    <variation>G</variation>
    <location>
        <position position="81"/>
    </location>
</feature>
<feature type="sequence conflict" description="In Ref. 2; AAA02749." evidence="8" ref="2">
    <location>
        <position position="124"/>
    </location>
</feature>
<feature type="sequence conflict" description="In Ref. 3; AAB23193." evidence="8" ref="3">
    <original>S</original>
    <variation>C</variation>
    <location>
        <position position="538"/>
    </location>
</feature>
<feature type="sequence conflict" description="In Ref. 2; AAA02749." evidence="8" ref="2">
    <original>R</original>
    <variation>H</variation>
    <location>
        <position position="557"/>
    </location>
</feature>
<accession>P26011</accession>
<accession>Q3U2M1</accession>
<accession>Q64656</accession>
<evidence type="ECO:0000250" key="1">
    <source>
        <dbReference type="UniProtKB" id="P05107"/>
    </source>
</evidence>
<evidence type="ECO:0000250" key="2">
    <source>
        <dbReference type="UniProtKB" id="P05556"/>
    </source>
</evidence>
<evidence type="ECO:0000250" key="3">
    <source>
        <dbReference type="UniProtKB" id="P26010"/>
    </source>
</evidence>
<evidence type="ECO:0000255" key="4"/>
<evidence type="ECO:0000255" key="5">
    <source>
        <dbReference type="PROSITE-ProRule" id="PRU01392"/>
    </source>
</evidence>
<evidence type="ECO:0000256" key="6">
    <source>
        <dbReference type="SAM" id="MobiDB-lite"/>
    </source>
</evidence>
<evidence type="ECO:0000269" key="7">
    <source>
    </source>
</evidence>
<evidence type="ECO:0000305" key="8"/>
<sequence>MVDSSTVLIFLLVLGGGQSELDTKITSSGEAAEWEDPDLSLQGSCQPVPSCQKCILSHPSCAWCKQLNFTASGEAEARRCARREELLARGCPAQELEEPRGRQEVLQDKPLSQGDRGEGATQLAPQRIRVTLRPGEPQKFRVRFLRAAGYPVDLYYLMDLSYSMKDDLERVRQLGHALLVRLQEVTHSVRIGFGSFVDKTVLPFVSTVPSKLHHPCPSRLERCQPPFSFHHVLSLTGDAQAFEREVGRQNVSGNLDSPEGGFDAILQAALCQEQIGWRNVSRLLVFTSDDTFHTAGDGKLGGIFMPSDGRCHLDSNGVYTNSAEFDYPSVGQVAQALTAANIQPIFAVTGATLPVYQELRQLIPKSAVGELSEDSSNVVQLIMDAYDSLSSTVTLEHSPLPPGVSISFESHCKGPEKTEGEAGDRGQCNDVRVNQTVDFWVTLQATHCLPEAHVLRLWALGFSEELTVELHTVCDCNCGDAQPHAPYCSDGQGDLQCGICSCAPGRLGQLCECSEADLSSPDLESGCRAPNGTGPLCSGKGRCQCGRCSCSGQSSGRLCECDDASCERHEGILCGGFGHCQCGVCHCHANHTGRACECSKSVDSCVSPEGGLCSGHGYCKCNRCQCLDGYYGALCDQCLGCKSPCEQYRDCAECGAFGTGPLAANCSVVCADVNVTLTLAPNLDDGWCKERTIDNQLFFFLVEHAASGIVLRVRPQEKGVDHTRAIILGCTGGIVAVGLGLVLAYRLSVEIYDRREYRRFEKEQQQLNWKQDNNPLYKSAITTTVNPRFQGTNGRSPSLSLTREAD</sequence>
<proteinExistence type="evidence at protein level"/>